<proteinExistence type="inferred from homology"/>
<protein>
    <recommendedName>
        <fullName evidence="1">Small ribosomal subunit protein uS7</fullName>
    </recommendedName>
    <alternativeName>
        <fullName evidence="2">30S ribosomal protein S7</fullName>
    </alternativeName>
</protein>
<sequence>MPRRRVVGQRKILPDPKFHSELLAKFINVIMQDGKKSTAEKIIYKALDVVAEKKSEAHLSILEAALDNVRPSVEVKSRRVGGSTYQVPCEVRPVRRNALAMRWLVEAARKRGEKSMALRLAGEMLDASENKGTAVKKREDVHRMAEANKAFAHYRW</sequence>
<evidence type="ECO:0000255" key="1">
    <source>
        <dbReference type="HAMAP-Rule" id="MF_00480"/>
    </source>
</evidence>
<evidence type="ECO:0000305" key="2"/>
<name>RS7_SHEDO</name>
<reference key="1">
    <citation type="submission" date="2006-03" db="EMBL/GenBank/DDBJ databases">
        <title>Complete sequence of Shewanella denitrificans OS217.</title>
        <authorList>
            <consortium name="US DOE Joint Genome Institute"/>
            <person name="Copeland A."/>
            <person name="Lucas S."/>
            <person name="Lapidus A."/>
            <person name="Barry K."/>
            <person name="Detter J.C."/>
            <person name="Glavina del Rio T."/>
            <person name="Hammon N."/>
            <person name="Israni S."/>
            <person name="Dalin E."/>
            <person name="Tice H."/>
            <person name="Pitluck S."/>
            <person name="Brettin T."/>
            <person name="Bruce D."/>
            <person name="Han C."/>
            <person name="Tapia R."/>
            <person name="Gilna P."/>
            <person name="Kiss H."/>
            <person name="Schmutz J."/>
            <person name="Larimer F."/>
            <person name="Land M."/>
            <person name="Hauser L."/>
            <person name="Kyrpides N."/>
            <person name="Lykidis A."/>
            <person name="Richardson P."/>
        </authorList>
    </citation>
    <scope>NUCLEOTIDE SEQUENCE [LARGE SCALE GENOMIC DNA]</scope>
    <source>
        <strain>OS217 / ATCC BAA-1090 / DSM 15013</strain>
    </source>
</reference>
<feature type="chain" id="PRO_1000014283" description="Small ribosomal subunit protein uS7">
    <location>
        <begin position="1"/>
        <end position="156"/>
    </location>
</feature>
<comment type="function">
    <text evidence="1">One of the primary rRNA binding proteins, it binds directly to 16S rRNA where it nucleates assembly of the head domain of the 30S subunit. Is located at the subunit interface close to the decoding center, probably blocks exit of the E-site tRNA.</text>
</comment>
<comment type="subunit">
    <text evidence="1">Part of the 30S ribosomal subunit. Contacts proteins S9 and S11.</text>
</comment>
<comment type="similarity">
    <text evidence="1">Belongs to the universal ribosomal protein uS7 family.</text>
</comment>
<accession>Q12SW3</accession>
<gene>
    <name evidence="1" type="primary">rpsG</name>
    <name type="ordered locus">Sden_0166</name>
</gene>
<organism>
    <name type="scientific">Shewanella denitrificans (strain OS217 / ATCC BAA-1090 / DSM 15013)</name>
    <dbReference type="NCBI Taxonomy" id="318161"/>
    <lineage>
        <taxon>Bacteria</taxon>
        <taxon>Pseudomonadati</taxon>
        <taxon>Pseudomonadota</taxon>
        <taxon>Gammaproteobacteria</taxon>
        <taxon>Alteromonadales</taxon>
        <taxon>Shewanellaceae</taxon>
        <taxon>Shewanella</taxon>
    </lineage>
</organism>
<dbReference type="EMBL" id="CP000302">
    <property type="protein sequence ID" value="ABE53463.1"/>
    <property type="molecule type" value="Genomic_DNA"/>
</dbReference>
<dbReference type="RefSeq" id="WP_011494632.1">
    <property type="nucleotide sequence ID" value="NC_007954.1"/>
</dbReference>
<dbReference type="SMR" id="Q12SW3"/>
<dbReference type="STRING" id="318161.Sden_0166"/>
<dbReference type="KEGG" id="sdn:Sden_0166"/>
<dbReference type="eggNOG" id="COG0049">
    <property type="taxonomic scope" value="Bacteria"/>
</dbReference>
<dbReference type="HOGENOM" id="CLU_072226_1_1_6"/>
<dbReference type="OrthoDB" id="9807653at2"/>
<dbReference type="Proteomes" id="UP000001982">
    <property type="component" value="Chromosome"/>
</dbReference>
<dbReference type="GO" id="GO:0015935">
    <property type="term" value="C:small ribosomal subunit"/>
    <property type="evidence" value="ECO:0007669"/>
    <property type="project" value="InterPro"/>
</dbReference>
<dbReference type="GO" id="GO:0019843">
    <property type="term" value="F:rRNA binding"/>
    <property type="evidence" value="ECO:0007669"/>
    <property type="project" value="UniProtKB-UniRule"/>
</dbReference>
<dbReference type="GO" id="GO:0003735">
    <property type="term" value="F:structural constituent of ribosome"/>
    <property type="evidence" value="ECO:0007669"/>
    <property type="project" value="InterPro"/>
</dbReference>
<dbReference type="GO" id="GO:0000049">
    <property type="term" value="F:tRNA binding"/>
    <property type="evidence" value="ECO:0007669"/>
    <property type="project" value="UniProtKB-UniRule"/>
</dbReference>
<dbReference type="GO" id="GO:0006412">
    <property type="term" value="P:translation"/>
    <property type="evidence" value="ECO:0007669"/>
    <property type="project" value="UniProtKB-UniRule"/>
</dbReference>
<dbReference type="CDD" id="cd14869">
    <property type="entry name" value="uS7_Bacteria"/>
    <property type="match status" value="1"/>
</dbReference>
<dbReference type="FunFam" id="1.10.455.10:FF:000001">
    <property type="entry name" value="30S ribosomal protein S7"/>
    <property type="match status" value="1"/>
</dbReference>
<dbReference type="Gene3D" id="1.10.455.10">
    <property type="entry name" value="Ribosomal protein S7 domain"/>
    <property type="match status" value="1"/>
</dbReference>
<dbReference type="HAMAP" id="MF_00480_B">
    <property type="entry name" value="Ribosomal_uS7_B"/>
    <property type="match status" value="1"/>
</dbReference>
<dbReference type="InterPro" id="IPR000235">
    <property type="entry name" value="Ribosomal_uS7"/>
</dbReference>
<dbReference type="InterPro" id="IPR005717">
    <property type="entry name" value="Ribosomal_uS7_bac/org-type"/>
</dbReference>
<dbReference type="InterPro" id="IPR020606">
    <property type="entry name" value="Ribosomal_uS7_CS"/>
</dbReference>
<dbReference type="InterPro" id="IPR023798">
    <property type="entry name" value="Ribosomal_uS7_dom"/>
</dbReference>
<dbReference type="InterPro" id="IPR036823">
    <property type="entry name" value="Ribosomal_uS7_dom_sf"/>
</dbReference>
<dbReference type="NCBIfam" id="TIGR01029">
    <property type="entry name" value="rpsG_bact"/>
    <property type="match status" value="1"/>
</dbReference>
<dbReference type="PANTHER" id="PTHR11205">
    <property type="entry name" value="RIBOSOMAL PROTEIN S7"/>
    <property type="match status" value="1"/>
</dbReference>
<dbReference type="Pfam" id="PF00177">
    <property type="entry name" value="Ribosomal_S7"/>
    <property type="match status" value="1"/>
</dbReference>
<dbReference type="PIRSF" id="PIRSF002122">
    <property type="entry name" value="RPS7p_RPS7a_RPS5e_RPS7o"/>
    <property type="match status" value="1"/>
</dbReference>
<dbReference type="SUPFAM" id="SSF47973">
    <property type="entry name" value="Ribosomal protein S7"/>
    <property type="match status" value="1"/>
</dbReference>
<dbReference type="PROSITE" id="PS00052">
    <property type="entry name" value="RIBOSOMAL_S7"/>
    <property type="match status" value="1"/>
</dbReference>
<keyword id="KW-1185">Reference proteome</keyword>
<keyword id="KW-0687">Ribonucleoprotein</keyword>
<keyword id="KW-0689">Ribosomal protein</keyword>
<keyword id="KW-0694">RNA-binding</keyword>
<keyword id="KW-0699">rRNA-binding</keyword>
<keyword id="KW-0820">tRNA-binding</keyword>